<keyword id="KW-0488">Methylation</keyword>
<keyword id="KW-0687">Ribonucleoprotein</keyword>
<keyword id="KW-0689">Ribosomal protein</keyword>
<keyword id="KW-0694">RNA-binding</keyword>
<keyword id="KW-0699">rRNA-binding</keyword>
<keyword id="KW-0820">tRNA-binding</keyword>
<reference key="1">
    <citation type="journal article" date="2006" name="J. Bacteriol.">
        <title>Whole-genome sequence of Listeria welshimeri reveals common steps in genome reduction with Listeria innocua as compared to Listeria monocytogenes.</title>
        <authorList>
            <person name="Hain T."/>
            <person name="Steinweg C."/>
            <person name="Kuenne C.T."/>
            <person name="Billion A."/>
            <person name="Ghai R."/>
            <person name="Chatterjee S.S."/>
            <person name="Domann E."/>
            <person name="Kaerst U."/>
            <person name="Goesmann A."/>
            <person name="Bekel T."/>
            <person name="Bartels D."/>
            <person name="Kaiser O."/>
            <person name="Meyer F."/>
            <person name="Puehler A."/>
            <person name="Weisshaar B."/>
            <person name="Wehland J."/>
            <person name="Liang C."/>
            <person name="Dandekar T."/>
            <person name="Lampidis R."/>
            <person name="Kreft J."/>
            <person name="Goebel W."/>
            <person name="Chakraborty T."/>
        </authorList>
    </citation>
    <scope>NUCLEOTIDE SEQUENCE [LARGE SCALE GENOMIC DNA]</scope>
    <source>
        <strain>ATCC 35897 / DSM 20650 / CCUG 15529 / CIP 8149 / NCTC 11857 / SLCC 5334 / V8</strain>
    </source>
</reference>
<feature type="chain" id="PRO_0000295995" description="Small ribosomal subunit protein uS12">
    <location>
        <begin position="1"/>
        <end position="137"/>
    </location>
</feature>
<feature type="region of interest" description="Disordered" evidence="3">
    <location>
        <begin position="1"/>
        <end position="26"/>
    </location>
</feature>
<feature type="compositionally biased region" description="Basic residues" evidence="3">
    <location>
        <begin position="9"/>
        <end position="18"/>
    </location>
</feature>
<feature type="modified residue" description="3-methylthioaspartic acid" evidence="1">
    <location>
        <position position="102"/>
    </location>
</feature>
<organism>
    <name type="scientific">Listeria welshimeri serovar 6b (strain ATCC 35897 / DSM 20650 / CCUG 15529 / CIP 8149 / NCTC 11857 / SLCC 5334 / V8)</name>
    <dbReference type="NCBI Taxonomy" id="386043"/>
    <lineage>
        <taxon>Bacteria</taxon>
        <taxon>Bacillati</taxon>
        <taxon>Bacillota</taxon>
        <taxon>Bacilli</taxon>
        <taxon>Bacillales</taxon>
        <taxon>Listeriaceae</taxon>
        <taxon>Listeria</taxon>
    </lineage>
</organism>
<name>RS12_LISW6</name>
<sequence length="137" mass="15184">MPTINQLVRKPRQSKIKKSTSPALNKGLNSFKRELTDVNSPQKRGVCTRVGTMTPKKPNSALRKYARVRLSNGIEVTAYIPGIGHNLQEHSVVLIRGGRVKDLPGVRYHIVRGALDTAGVENRGQSRSKYGTKKPKK</sequence>
<gene>
    <name evidence="2" type="primary">rpsL</name>
    <name type="ordered locus">lwe2605</name>
</gene>
<dbReference type="EMBL" id="AM263198">
    <property type="protein sequence ID" value="CAK22023.1"/>
    <property type="molecule type" value="Genomic_DNA"/>
</dbReference>
<dbReference type="RefSeq" id="WP_003720973.1">
    <property type="nucleotide sequence ID" value="NC_008555.1"/>
</dbReference>
<dbReference type="SMR" id="A0ALZ1"/>
<dbReference type="STRING" id="386043.lwe2605"/>
<dbReference type="GeneID" id="93240543"/>
<dbReference type="KEGG" id="lwe:lwe2605"/>
<dbReference type="eggNOG" id="COG0048">
    <property type="taxonomic scope" value="Bacteria"/>
</dbReference>
<dbReference type="HOGENOM" id="CLU_104295_1_2_9"/>
<dbReference type="OrthoDB" id="9802366at2"/>
<dbReference type="Proteomes" id="UP000000779">
    <property type="component" value="Chromosome"/>
</dbReference>
<dbReference type="GO" id="GO:0015935">
    <property type="term" value="C:small ribosomal subunit"/>
    <property type="evidence" value="ECO:0007669"/>
    <property type="project" value="InterPro"/>
</dbReference>
<dbReference type="GO" id="GO:0019843">
    <property type="term" value="F:rRNA binding"/>
    <property type="evidence" value="ECO:0007669"/>
    <property type="project" value="UniProtKB-UniRule"/>
</dbReference>
<dbReference type="GO" id="GO:0003735">
    <property type="term" value="F:structural constituent of ribosome"/>
    <property type="evidence" value="ECO:0007669"/>
    <property type="project" value="InterPro"/>
</dbReference>
<dbReference type="GO" id="GO:0000049">
    <property type="term" value="F:tRNA binding"/>
    <property type="evidence" value="ECO:0007669"/>
    <property type="project" value="UniProtKB-UniRule"/>
</dbReference>
<dbReference type="GO" id="GO:0006412">
    <property type="term" value="P:translation"/>
    <property type="evidence" value="ECO:0007669"/>
    <property type="project" value="UniProtKB-UniRule"/>
</dbReference>
<dbReference type="CDD" id="cd03368">
    <property type="entry name" value="Ribosomal_S12"/>
    <property type="match status" value="1"/>
</dbReference>
<dbReference type="FunFam" id="2.40.50.140:FF:000001">
    <property type="entry name" value="30S ribosomal protein S12"/>
    <property type="match status" value="1"/>
</dbReference>
<dbReference type="Gene3D" id="2.40.50.140">
    <property type="entry name" value="Nucleic acid-binding proteins"/>
    <property type="match status" value="1"/>
</dbReference>
<dbReference type="HAMAP" id="MF_00403_B">
    <property type="entry name" value="Ribosomal_uS12_B"/>
    <property type="match status" value="1"/>
</dbReference>
<dbReference type="InterPro" id="IPR012340">
    <property type="entry name" value="NA-bd_OB-fold"/>
</dbReference>
<dbReference type="InterPro" id="IPR006032">
    <property type="entry name" value="Ribosomal_uS12"/>
</dbReference>
<dbReference type="InterPro" id="IPR005679">
    <property type="entry name" value="Ribosomal_uS12_bac"/>
</dbReference>
<dbReference type="NCBIfam" id="TIGR00981">
    <property type="entry name" value="rpsL_bact"/>
    <property type="match status" value="1"/>
</dbReference>
<dbReference type="PANTHER" id="PTHR11652">
    <property type="entry name" value="30S RIBOSOMAL PROTEIN S12 FAMILY MEMBER"/>
    <property type="match status" value="1"/>
</dbReference>
<dbReference type="Pfam" id="PF00164">
    <property type="entry name" value="Ribosom_S12_S23"/>
    <property type="match status" value="1"/>
</dbReference>
<dbReference type="PIRSF" id="PIRSF002133">
    <property type="entry name" value="Ribosomal_S12/S23"/>
    <property type="match status" value="1"/>
</dbReference>
<dbReference type="PRINTS" id="PR01034">
    <property type="entry name" value="RIBOSOMALS12"/>
</dbReference>
<dbReference type="SUPFAM" id="SSF50249">
    <property type="entry name" value="Nucleic acid-binding proteins"/>
    <property type="match status" value="1"/>
</dbReference>
<dbReference type="PROSITE" id="PS00055">
    <property type="entry name" value="RIBOSOMAL_S12"/>
    <property type="match status" value="1"/>
</dbReference>
<proteinExistence type="inferred from homology"/>
<evidence type="ECO:0000250" key="1"/>
<evidence type="ECO:0000255" key="2">
    <source>
        <dbReference type="HAMAP-Rule" id="MF_00403"/>
    </source>
</evidence>
<evidence type="ECO:0000256" key="3">
    <source>
        <dbReference type="SAM" id="MobiDB-lite"/>
    </source>
</evidence>
<evidence type="ECO:0000305" key="4"/>
<accession>A0ALZ1</accession>
<protein>
    <recommendedName>
        <fullName evidence="2">Small ribosomal subunit protein uS12</fullName>
    </recommendedName>
    <alternativeName>
        <fullName evidence="4">30S ribosomal protein S12</fullName>
    </alternativeName>
</protein>
<comment type="function">
    <text evidence="2">With S4 and S5 plays an important role in translational accuracy.</text>
</comment>
<comment type="function">
    <text evidence="2">Interacts with and stabilizes bases of the 16S rRNA that are involved in tRNA selection in the A site and with the mRNA backbone. Located at the interface of the 30S and 50S subunits, it traverses the body of the 30S subunit contacting proteins on the other side and probably holding the rRNA structure together. The combined cluster of proteins S8, S12 and S17 appears to hold together the shoulder and platform of the 30S subunit.</text>
</comment>
<comment type="subunit">
    <text evidence="2">Part of the 30S ribosomal subunit. Contacts proteins S8 and S17. May interact with IF1 in the 30S initiation complex.</text>
</comment>
<comment type="similarity">
    <text evidence="2">Belongs to the universal ribosomal protein uS12 family.</text>
</comment>